<proteinExistence type="inferred from homology"/>
<accession>Q6C229</accession>
<protein>
    <recommendedName>
        <fullName>Mediator of RNA polymerase II transcription subunit 12</fullName>
    </recommendedName>
    <alternativeName>
        <fullName>Mediator complex subunit 12</fullName>
    </alternativeName>
</protein>
<dbReference type="EMBL" id="CR382132">
    <property type="protein sequence ID" value="CAG78090.1"/>
    <property type="status" value="ALT_SEQ"/>
    <property type="molecule type" value="Genomic_DNA"/>
</dbReference>
<dbReference type="RefSeq" id="XP_505283.1">
    <property type="nucleotide sequence ID" value="XM_505283.1"/>
</dbReference>
<dbReference type="SMR" id="Q6C229"/>
<dbReference type="STRING" id="284591.Q6C229"/>
<dbReference type="KEGG" id="yli:2909018"/>
<dbReference type="InParanoid" id="Q6C229"/>
<dbReference type="OrthoDB" id="99691at4891"/>
<dbReference type="Proteomes" id="UP000001300">
    <property type="component" value="Chromosome F"/>
</dbReference>
<dbReference type="GO" id="GO:0016592">
    <property type="term" value="C:mediator complex"/>
    <property type="evidence" value="ECO:0007669"/>
    <property type="project" value="InterPro"/>
</dbReference>
<dbReference type="GO" id="GO:0003712">
    <property type="term" value="F:transcription coregulator activity"/>
    <property type="evidence" value="ECO:0007669"/>
    <property type="project" value="InterPro"/>
</dbReference>
<dbReference type="GO" id="GO:0006357">
    <property type="term" value="P:regulation of transcription by RNA polymerase II"/>
    <property type="evidence" value="ECO:0007669"/>
    <property type="project" value="InterPro"/>
</dbReference>
<dbReference type="InterPro" id="IPR019035">
    <property type="entry name" value="Mediator_Med12"/>
</dbReference>
<dbReference type="PANTHER" id="PTHR46567">
    <property type="entry name" value="MEDIATOR OF RNA POLYMERASE II TRANSCRIPTION SUBUNIT 12"/>
    <property type="match status" value="1"/>
</dbReference>
<dbReference type="PANTHER" id="PTHR46567:SF1">
    <property type="entry name" value="MEDIATOR OF RNA POLYMERASE II TRANSCRIPTION SUBUNIT 12"/>
    <property type="match status" value="1"/>
</dbReference>
<dbReference type="Pfam" id="PF09497">
    <property type="entry name" value="Med12"/>
    <property type="match status" value="1"/>
</dbReference>
<dbReference type="SMART" id="SM01281">
    <property type="entry name" value="Med12"/>
    <property type="match status" value="1"/>
</dbReference>
<organism>
    <name type="scientific">Yarrowia lipolytica (strain CLIB 122 / E 150)</name>
    <name type="common">Yeast</name>
    <name type="synonym">Candida lipolytica</name>
    <dbReference type="NCBI Taxonomy" id="284591"/>
    <lineage>
        <taxon>Eukaryota</taxon>
        <taxon>Fungi</taxon>
        <taxon>Dikarya</taxon>
        <taxon>Ascomycota</taxon>
        <taxon>Saccharomycotina</taxon>
        <taxon>Dipodascomycetes</taxon>
        <taxon>Dipodascales</taxon>
        <taxon>Dipodascales incertae sedis</taxon>
        <taxon>Yarrowia</taxon>
    </lineage>
</organism>
<evidence type="ECO:0000250" key="1"/>
<evidence type="ECO:0000256" key="2">
    <source>
        <dbReference type="SAM" id="MobiDB-lite"/>
    </source>
</evidence>
<evidence type="ECO:0000305" key="3"/>
<name>SRB8_YARLI</name>
<gene>
    <name type="primary">SRB8</name>
    <name type="synonym">MED12</name>
    <name type="ordered locus">YALI0F11341g</name>
</gene>
<comment type="function">
    <text evidence="1">Component of the SRB8-11 complex. The SRB8-11 complex is a regulatory module of the Mediator complex which is itself involved in regulation of basal and activated RNA polymerase II-dependent transcription. The SRB8-11 complex may be involved in the transcriptional repression of a subset of genes regulated by Mediator. It may inhibit the association of the Mediator complex with RNA polymerase II to form the holoenzyme complex (By similarity).</text>
</comment>
<comment type="subunit">
    <text evidence="1">Component of the SRB8-11 complex, which itself associates with the Mediator complex.</text>
</comment>
<comment type="subcellular location">
    <subcellularLocation>
        <location evidence="3">Nucleus</location>
    </subcellularLocation>
</comment>
<comment type="similarity">
    <text evidence="3">Belongs to the Mediator complex subunit 12 family.</text>
</comment>
<comment type="sequence caution" evidence="3">
    <conflict type="erroneous gene model prediction">
        <sequence resource="EMBL-CDS" id="CAG78090"/>
    </conflict>
</comment>
<reference key="1">
    <citation type="journal article" date="2004" name="Nature">
        <title>Genome evolution in yeasts.</title>
        <authorList>
            <person name="Dujon B."/>
            <person name="Sherman D."/>
            <person name="Fischer G."/>
            <person name="Durrens P."/>
            <person name="Casaregola S."/>
            <person name="Lafontaine I."/>
            <person name="de Montigny J."/>
            <person name="Marck C."/>
            <person name="Neuveglise C."/>
            <person name="Talla E."/>
            <person name="Goffard N."/>
            <person name="Frangeul L."/>
            <person name="Aigle M."/>
            <person name="Anthouard V."/>
            <person name="Babour A."/>
            <person name="Barbe V."/>
            <person name="Barnay S."/>
            <person name="Blanchin S."/>
            <person name="Beckerich J.-M."/>
            <person name="Beyne E."/>
            <person name="Bleykasten C."/>
            <person name="Boisrame A."/>
            <person name="Boyer J."/>
            <person name="Cattolico L."/>
            <person name="Confanioleri F."/>
            <person name="de Daruvar A."/>
            <person name="Despons L."/>
            <person name="Fabre E."/>
            <person name="Fairhead C."/>
            <person name="Ferry-Dumazet H."/>
            <person name="Groppi A."/>
            <person name="Hantraye F."/>
            <person name="Hennequin C."/>
            <person name="Jauniaux N."/>
            <person name="Joyet P."/>
            <person name="Kachouri R."/>
            <person name="Kerrest A."/>
            <person name="Koszul R."/>
            <person name="Lemaire M."/>
            <person name="Lesur I."/>
            <person name="Ma L."/>
            <person name="Muller H."/>
            <person name="Nicaud J.-M."/>
            <person name="Nikolski M."/>
            <person name="Oztas S."/>
            <person name="Ozier-Kalogeropoulos O."/>
            <person name="Pellenz S."/>
            <person name="Potier S."/>
            <person name="Richard G.-F."/>
            <person name="Straub M.-L."/>
            <person name="Suleau A."/>
            <person name="Swennen D."/>
            <person name="Tekaia F."/>
            <person name="Wesolowski-Louvel M."/>
            <person name="Westhof E."/>
            <person name="Wirth B."/>
            <person name="Zeniou-Meyer M."/>
            <person name="Zivanovic Y."/>
            <person name="Bolotin-Fukuhara M."/>
            <person name="Thierry A."/>
            <person name="Bouchier C."/>
            <person name="Caudron B."/>
            <person name="Scarpelli C."/>
            <person name="Gaillardin C."/>
            <person name="Weissenbach J."/>
            <person name="Wincker P."/>
            <person name="Souciet J.-L."/>
        </authorList>
    </citation>
    <scope>NUCLEOTIDE SEQUENCE [LARGE SCALE GENOMIC DNA]</scope>
    <source>
        <strain>CLIB 122 / E 150</strain>
    </source>
</reference>
<feature type="chain" id="PRO_0000312979" description="Mediator of RNA polymerase II transcription subunit 12">
    <location>
        <begin position="1"/>
        <end position="1362"/>
    </location>
</feature>
<feature type="region of interest" description="Disordered" evidence="2">
    <location>
        <begin position="31"/>
        <end position="51"/>
    </location>
</feature>
<sequence>MNSSAPSPGPSSRLYRSINSRDDLSQQRYVLRPPDDIHPLVDPARIGDSVYPDFYPWKRSTDEEDARMVDNLQKGYAEPPSVPHESQSAKKSIASLLRIKSNMTALSCFIITAMHIRVDTCRITTPGTFKPPPRVTLTDHKREAWLKDLANPAVPLRKLSRTIPHGIRNKVLLDQCCAKRIAPSRAVWFARCVGANELRGLKRKGHHQMGNMSEAIWLQEWTECVVDVLQRSSVAFLRAEGEPQARQTAKQNFAYMWVVGLLSDDNTKDTKAGSGVAPGTGASTTSKLSSVEKLPVAILIIRTFWKPLLTFPNLAKKLAQNLLAELSKLEADAHSDKPFYQPTIKALSTLVNALFDAQPDAFVMPSKWVQLGSTFEAIVSDSESTRVRNEALVISDTPKTRRTRNKQAVIISILDAARAPFDKTLFNQIVDTRADFGTIIQTILAWAVSDSRVSVERVFIASHLVSQLSEGVDGDAVPSHIVQFLLSVKSHLDVRIDDLYALVTELCVLDIFQPQDYVRSLISSGVLYISRLSEWANVQLDILGNLPLVAVPSSCQVQVRYMVRKVAKYASYNENELLERTNNALRVLLPGVFDSQAEDVDMSSSSSSLSDSTNIPYSEFTQNTRIVVAENLYTSLCAAVERGYVPTTQEFAQYQLILENLHAWRLMCASIQLIVPKCTQSHLLYFLASATRYQWQAFACIADMPALVKVFMHQYRGLRKVRVSRELWDLVQFSAQQLPELKPELETLLKNSSSPQLSPISEVTPQTDSEATKDVNLPQALNDLLLHSSDVRTSCKMLANYKDDSQFSNQLMTWLRDQEVSLQLLQTLVFLVVYECTCIEKVGDLFLQIHNLRDMSGGSRLLLSLIARDLTQEYSLSTTEAFSLQFQRKLFADQHPRIYLRLVAQYLFEREVFQDPQWLDDVDTFCKEVAVHHPALFSQLIVDPVIEPDNAVAASSLQQLLNHLLKLDLGTGTSLADDLQQLITHVTPFNMFLAQTQLRLLFAHRGRISKDPVAMDTSPELTINSTTPSTDTTDEDVSVLFRVLSDPGLLKLPPFFGDLFSELPGELKGRILARAETTFLTSPNFPRVGEDNIVSLLIELADSLADSVTEDVCKTQTFALSSGLQRLVEASVREPHPPGLAEGISMFLKIAMIHEKSLMASEDAEVTMLRNHVVEGLQALLDSPFVATTPDLKATLQDTWTALKSELSEVAEPANSAPSKAGPTRDLLLYSTANDAFSEVTVRSFDLLEESNPTMGVNDAALNLALFNATIEKRIPIAWNNGHKRQLVDGGRGGRKTARGTDSSLVPTILEGIPRCMDEYSNHWELFFCFYLYTMRASEVHDLRANRASSFERRASSVELLA</sequence>
<keyword id="KW-0010">Activator</keyword>
<keyword id="KW-0539">Nucleus</keyword>
<keyword id="KW-1185">Reference proteome</keyword>
<keyword id="KW-0678">Repressor</keyword>
<keyword id="KW-0804">Transcription</keyword>
<keyword id="KW-0805">Transcription regulation</keyword>